<accession>Q0HL58</accession>
<reference key="1">
    <citation type="submission" date="2006-08" db="EMBL/GenBank/DDBJ databases">
        <title>Complete sequence of Shewanella sp. MR-4.</title>
        <authorList>
            <consortium name="US DOE Joint Genome Institute"/>
            <person name="Copeland A."/>
            <person name="Lucas S."/>
            <person name="Lapidus A."/>
            <person name="Barry K."/>
            <person name="Detter J.C."/>
            <person name="Glavina del Rio T."/>
            <person name="Hammon N."/>
            <person name="Israni S."/>
            <person name="Dalin E."/>
            <person name="Tice H."/>
            <person name="Pitluck S."/>
            <person name="Kiss H."/>
            <person name="Brettin T."/>
            <person name="Bruce D."/>
            <person name="Han C."/>
            <person name="Tapia R."/>
            <person name="Gilna P."/>
            <person name="Schmutz J."/>
            <person name="Larimer F."/>
            <person name="Land M."/>
            <person name="Hauser L."/>
            <person name="Kyrpides N."/>
            <person name="Mikhailova N."/>
            <person name="Nealson K."/>
            <person name="Konstantinidis K."/>
            <person name="Klappenbach J."/>
            <person name="Tiedje J."/>
            <person name="Richardson P."/>
        </authorList>
    </citation>
    <scope>NUCLEOTIDE SEQUENCE [LARGE SCALE GENOMIC DNA]</scope>
    <source>
        <strain>MR-4</strain>
    </source>
</reference>
<keyword id="KW-0010">Activator</keyword>
<keyword id="KW-0963">Cytoplasm</keyword>
<keyword id="KW-0678">Repressor</keyword>
<keyword id="KW-0694">RNA-binding</keyword>
<keyword id="KW-0810">Translation regulation</keyword>
<dbReference type="EMBL" id="CP000446">
    <property type="protein sequence ID" value="ABI38209.1"/>
    <property type="molecule type" value="Genomic_DNA"/>
</dbReference>
<dbReference type="RefSeq" id="WP_006082602.1">
    <property type="nucleotide sequence ID" value="NC_008321.1"/>
</dbReference>
<dbReference type="SMR" id="Q0HL58"/>
<dbReference type="GeneID" id="94727129"/>
<dbReference type="KEGG" id="she:Shewmr4_1129"/>
<dbReference type="HOGENOM" id="CLU_164837_2_2_6"/>
<dbReference type="GO" id="GO:0005829">
    <property type="term" value="C:cytosol"/>
    <property type="evidence" value="ECO:0007669"/>
    <property type="project" value="TreeGrafter"/>
</dbReference>
<dbReference type="GO" id="GO:0048027">
    <property type="term" value="F:mRNA 5'-UTR binding"/>
    <property type="evidence" value="ECO:0007669"/>
    <property type="project" value="UniProtKB-UniRule"/>
</dbReference>
<dbReference type="GO" id="GO:0006402">
    <property type="term" value="P:mRNA catabolic process"/>
    <property type="evidence" value="ECO:0007669"/>
    <property type="project" value="InterPro"/>
</dbReference>
<dbReference type="GO" id="GO:0045947">
    <property type="term" value="P:negative regulation of translational initiation"/>
    <property type="evidence" value="ECO:0007669"/>
    <property type="project" value="UniProtKB-UniRule"/>
</dbReference>
<dbReference type="GO" id="GO:0045948">
    <property type="term" value="P:positive regulation of translational initiation"/>
    <property type="evidence" value="ECO:0007669"/>
    <property type="project" value="UniProtKB-UniRule"/>
</dbReference>
<dbReference type="GO" id="GO:0006109">
    <property type="term" value="P:regulation of carbohydrate metabolic process"/>
    <property type="evidence" value="ECO:0007669"/>
    <property type="project" value="UniProtKB-UniRule"/>
</dbReference>
<dbReference type="FunFam" id="2.60.40.4380:FF:000001">
    <property type="entry name" value="Translational regulator CsrA"/>
    <property type="match status" value="1"/>
</dbReference>
<dbReference type="Gene3D" id="2.60.40.4380">
    <property type="entry name" value="Translational regulator CsrA"/>
    <property type="match status" value="1"/>
</dbReference>
<dbReference type="HAMAP" id="MF_00167">
    <property type="entry name" value="CsrA"/>
    <property type="match status" value="1"/>
</dbReference>
<dbReference type="InterPro" id="IPR003751">
    <property type="entry name" value="CsrA"/>
</dbReference>
<dbReference type="InterPro" id="IPR036107">
    <property type="entry name" value="CsrA_sf"/>
</dbReference>
<dbReference type="NCBIfam" id="TIGR00202">
    <property type="entry name" value="csrA"/>
    <property type="match status" value="1"/>
</dbReference>
<dbReference type="NCBIfam" id="NF002469">
    <property type="entry name" value="PRK01712.1"/>
    <property type="match status" value="1"/>
</dbReference>
<dbReference type="PANTHER" id="PTHR34984">
    <property type="entry name" value="CARBON STORAGE REGULATOR"/>
    <property type="match status" value="1"/>
</dbReference>
<dbReference type="PANTHER" id="PTHR34984:SF1">
    <property type="entry name" value="CARBON STORAGE REGULATOR"/>
    <property type="match status" value="1"/>
</dbReference>
<dbReference type="Pfam" id="PF02599">
    <property type="entry name" value="CsrA"/>
    <property type="match status" value="1"/>
</dbReference>
<dbReference type="SUPFAM" id="SSF117130">
    <property type="entry name" value="CsrA-like"/>
    <property type="match status" value="1"/>
</dbReference>
<sequence>MLILTRRVGETLMIGDEVTVTVLGVKGNQVRIGVNAPKEVSVHREEIYQRIQSEKSGTPSEGGNF</sequence>
<gene>
    <name evidence="1" type="primary">csrA</name>
    <name type="ordered locus">Shewmr4_1129</name>
</gene>
<proteinExistence type="inferred from homology"/>
<protein>
    <recommendedName>
        <fullName evidence="1">Translational regulator CsrA</fullName>
    </recommendedName>
    <alternativeName>
        <fullName evidence="1">Carbon storage regulator</fullName>
    </alternativeName>
</protein>
<organism>
    <name type="scientific">Shewanella sp. (strain MR-4)</name>
    <dbReference type="NCBI Taxonomy" id="60480"/>
    <lineage>
        <taxon>Bacteria</taxon>
        <taxon>Pseudomonadati</taxon>
        <taxon>Pseudomonadota</taxon>
        <taxon>Gammaproteobacteria</taxon>
        <taxon>Alteromonadales</taxon>
        <taxon>Shewanellaceae</taxon>
        <taxon>Shewanella</taxon>
    </lineage>
</organism>
<evidence type="ECO:0000255" key="1">
    <source>
        <dbReference type="HAMAP-Rule" id="MF_00167"/>
    </source>
</evidence>
<feature type="chain" id="PRO_1000023423" description="Translational regulator CsrA">
    <location>
        <begin position="1"/>
        <end position="65"/>
    </location>
</feature>
<comment type="function">
    <text evidence="1">A key translational regulator that binds mRNA to regulate translation initiation and/or mRNA stability. Mediates global changes in gene expression, shifting from rapid growth to stress survival by linking envelope stress, the stringent response and the catabolite repression systems. Usually binds in the 5'-UTR; binding at or near the Shine-Dalgarno sequence prevents ribosome-binding, repressing translation, binding elsewhere in the 5'-UTR can activate translation and/or stabilize the mRNA. Its function is antagonized by small RNA(s).</text>
</comment>
<comment type="subunit">
    <text evidence="1">Homodimer; the beta-strands of each monomer intercalate to form a hydrophobic core, while the alpha-helices form wings that extend away from the core.</text>
</comment>
<comment type="subcellular location">
    <subcellularLocation>
        <location evidence="1">Cytoplasm</location>
    </subcellularLocation>
</comment>
<comment type="similarity">
    <text evidence="1">Belongs to the CsrA/RsmA family.</text>
</comment>
<name>CSRA_SHESM</name>